<sequence>MRPRAPGPLWPLPWGALAWAVGFVGSLGSGDPAPGGVCWLQQGREATCSLVLKTDVSQAECCASGNIDTAWSNFTHPGNKISLLGFLGLVHCLPCKDSCEGVECGPGKACRMLGGRPRCECAPDCTGLPARLQVCGSDGATYRDECELRAARCRGHPDLRVMYRGRCRKSCAHVVCLRPQSCVVDQTGSAHCVVCRAAPCPAPSSPGQELCGNNNVTYLSSCHLRQATCFLGRSIGVRHPGSCAGTPEPLDPESEEEENFV</sequence>
<accession>Q1LZB9</accession>
<comment type="function">
    <text evidence="1">The secreted form is a binding and antagonizing protein for members of the TGF-beta family, such as activin, BMP2 and MSTN. Inhibits activin A-, activin B-, BMP2- and MSDT-induced cellular signaling; more effective on activin A than on activin B. Involved in bone formation; inhibits osteoclast differentiation. Involved in hematopoiesis; involved in differentiation of hemopoietic progenitor cells, increases hematopoietic cell adhesion to fibronectin and seems to contribute to the adhesion of hematopoietic precursor cells to the bone marrow stroma. The nuclear form is probably involved in transcriptional regulation via interaction with MLLT10 (By similarity).</text>
</comment>
<comment type="subunit">
    <text evidence="1">Interacts with INHBA and INHBB. Interacts with FN1. Interacts with ADAM12. Interacts with MLLT10; the interaction enhances MLLT10 in vitro transcriptional activity and self-association. Interacts with MSTN (By similarity).</text>
</comment>
<comment type="subcellular location">
    <subcellularLocation>
        <location evidence="1">Secreted</location>
    </subcellularLocation>
    <subcellularLocation>
        <location evidence="1">Nucleus</location>
    </subcellularLocation>
</comment>
<gene>
    <name type="primary">FSTL3</name>
</gene>
<dbReference type="EMBL" id="BC116095">
    <property type="protein sequence ID" value="AAI16096.1"/>
    <property type="molecule type" value="mRNA"/>
</dbReference>
<dbReference type="RefSeq" id="NP_001069178.1">
    <property type="nucleotide sequence ID" value="NM_001075710.2"/>
</dbReference>
<dbReference type="SMR" id="Q1LZB9"/>
<dbReference type="FunCoup" id="Q1LZB9">
    <property type="interactions" value="64"/>
</dbReference>
<dbReference type="STRING" id="9913.ENSBTAP00000072469"/>
<dbReference type="GlyCosmos" id="Q1LZB9">
    <property type="glycosylation" value="2 sites, No reported glycans"/>
</dbReference>
<dbReference type="GlyGen" id="Q1LZB9">
    <property type="glycosylation" value="2 sites"/>
</dbReference>
<dbReference type="PaxDb" id="9913-ENSBTAP00000028801"/>
<dbReference type="GeneID" id="515367"/>
<dbReference type="KEGG" id="bta:515367"/>
<dbReference type="CTD" id="10272"/>
<dbReference type="VEuPathDB" id="HostDB:ENSBTAG00000003018"/>
<dbReference type="eggNOG" id="KOG3649">
    <property type="taxonomic scope" value="Eukaryota"/>
</dbReference>
<dbReference type="HOGENOM" id="CLU_050745_1_0_1"/>
<dbReference type="InParanoid" id="Q1LZB9"/>
<dbReference type="OMA" id="HGGICWL"/>
<dbReference type="OrthoDB" id="6614329at2759"/>
<dbReference type="TreeFam" id="TF106409"/>
<dbReference type="Proteomes" id="UP000009136">
    <property type="component" value="Chromosome 7"/>
</dbReference>
<dbReference type="Bgee" id="ENSBTAG00000003018">
    <property type="expression patterns" value="Expressed in ureter and 101 other cell types or tissues"/>
</dbReference>
<dbReference type="GO" id="GO:0005615">
    <property type="term" value="C:extracellular space"/>
    <property type="evidence" value="ECO:0000318"/>
    <property type="project" value="GO_Central"/>
</dbReference>
<dbReference type="GO" id="GO:0005634">
    <property type="term" value="C:nucleus"/>
    <property type="evidence" value="ECO:0007669"/>
    <property type="project" value="UniProtKB-SubCell"/>
</dbReference>
<dbReference type="GO" id="GO:0005509">
    <property type="term" value="F:calcium ion binding"/>
    <property type="evidence" value="ECO:0000318"/>
    <property type="project" value="GO_Central"/>
</dbReference>
<dbReference type="GO" id="GO:0005518">
    <property type="term" value="F:collagen binding"/>
    <property type="evidence" value="ECO:0000318"/>
    <property type="project" value="GO_Central"/>
</dbReference>
<dbReference type="GO" id="GO:0050840">
    <property type="term" value="F:extracellular matrix binding"/>
    <property type="evidence" value="ECO:0000318"/>
    <property type="project" value="GO_Central"/>
</dbReference>
<dbReference type="GO" id="GO:0001503">
    <property type="term" value="P:ossification"/>
    <property type="evidence" value="ECO:0007669"/>
    <property type="project" value="UniProtKB-KW"/>
</dbReference>
<dbReference type="CDD" id="cd00104">
    <property type="entry name" value="KAZAL_FS"/>
    <property type="match status" value="2"/>
</dbReference>
<dbReference type="FunFam" id="3.30.60.30:FF:000025">
    <property type="entry name" value="Follistatin-related protein 3"/>
    <property type="match status" value="1"/>
</dbReference>
<dbReference type="FunFam" id="3.30.60.30:FF:000028">
    <property type="entry name" value="Follistatin-related protein 3"/>
    <property type="match status" value="1"/>
</dbReference>
<dbReference type="FunFam" id="3.90.290.10:FF:000021">
    <property type="entry name" value="follistatin-related protein 3"/>
    <property type="match status" value="1"/>
</dbReference>
<dbReference type="Gene3D" id="3.30.60.30">
    <property type="match status" value="2"/>
</dbReference>
<dbReference type="Gene3D" id="3.90.290.10">
    <property type="entry name" value="TGF-beta binding (TB) domain"/>
    <property type="match status" value="1"/>
</dbReference>
<dbReference type="InterPro" id="IPR003645">
    <property type="entry name" value="Fol_N"/>
</dbReference>
<dbReference type="InterPro" id="IPR015369">
    <property type="entry name" value="Follistatin/Osteonectin_EGF"/>
</dbReference>
<dbReference type="InterPro" id="IPR002350">
    <property type="entry name" value="Kazal_dom"/>
</dbReference>
<dbReference type="InterPro" id="IPR036058">
    <property type="entry name" value="Kazal_dom_sf"/>
</dbReference>
<dbReference type="InterPro" id="IPR050653">
    <property type="entry name" value="Prot_Inhib_GrowthFact_Antg"/>
</dbReference>
<dbReference type="InterPro" id="IPR017878">
    <property type="entry name" value="TB_dom"/>
</dbReference>
<dbReference type="InterPro" id="IPR036773">
    <property type="entry name" value="TB_dom_sf"/>
</dbReference>
<dbReference type="PANTHER" id="PTHR10913">
    <property type="entry name" value="FOLLISTATIN-RELATED"/>
    <property type="match status" value="1"/>
</dbReference>
<dbReference type="PANTHER" id="PTHR10913:SF16">
    <property type="entry name" value="FOLLISTATIN-RELATED PROTEIN 3"/>
    <property type="match status" value="1"/>
</dbReference>
<dbReference type="Pfam" id="PF09289">
    <property type="entry name" value="FOLN"/>
    <property type="match status" value="1"/>
</dbReference>
<dbReference type="Pfam" id="PF21333">
    <property type="entry name" value="FST_N"/>
    <property type="match status" value="1"/>
</dbReference>
<dbReference type="Pfam" id="PF07648">
    <property type="entry name" value="Kazal_2"/>
    <property type="match status" value="2"/>
</dbReference>
<dbReference type="SMART" id="SM00274">
    <property type="entry name" value="FOLN"/>
    <property type="match status" value="2"/>
</dbReference>
<dbReference type="SMART" id="SM00280">
    <property type="entry name" value="KAZAL"/>
    <property type="match status" value="2"/>
</dbReference>
<dbReference type="SUPFAM" id="SSF100895">
    <property type="entry name" value="Kazal-type serine protease inhibitors"/>
    <property type="match status" value="2"/>
</dbReference>
<dbReference type="SUPFAM" id="SSF57581">
    <property type="entry name" value="TB module/8-cys domain"/>
    <property type="match status" value="1"/>
</dbReference>
<dbReference type="PROSITE" id="PS51465">
    <property type="entry name" value="KAZAL_2"/>
    <property type="match status" value="2"/>
</dbReference>
<dbReference type="PROSITE" id="PS51364">
    <property type="entry name" value="TB"/>
    <property type="match status" value="1"/>
</dbReference>
<protein>
    <recommendedName>
        <fullName>Follistatin-related protein 3</fullName>
    </recommendedName>
    <alternativeName>
        <fullName>Follistatin-like protein 3</fullName>
    </alternativeName>
</protein>
<organism>
    <name type="scientific">Bos taurus</name>
    <name type="common">Bovine</name>
    <dbReference type="NCBI Taxonomy" id="9913"/>
    <lineage>
        <taxon>Eukaryota</taxon>
        <taxon>Metazoa</taxon>
        <taxon>Chordata</taxon>
        <taxon>Craniata</taxon>
        <taxon>Vertebrata</taxon>
        <taxon>Euteleostomi</taxon>
        <taxon>Mammalia</taxon>
        <taxon>Eutheria</taxon>
        <taxon>Laurasiatheria</taxon>
        <taxon>Artiodactyla</taxon>
        <taxon>Ruminantia</taxon>
        <taxon>Pecora</taxon>
        <taxon>Bovidae</taxon>
        <taxon>Bovinae</taxon>
        <taxon>Bos</taxon>
    </lineage>
</organism>
<reference key="1">
    <citation type="submission" date="2006-05" db="EMBL/GenBank/DDBJ databases">
        <authorList>
            <consortium name="NIH - Mammalian Gene Collection (MGC) project"/>
        </authorList>
    </citation>
    <scope>NUCLEOTIDE SEQUENCE [LARGE SCALE MRNA]</scope>
    <source>
        <strain>Hereford</strain>
        <tissue>Ascending colon</tissue>
    </source>
</reference>
<name>FSTL3_BOVIN</name>
<feature type="signal peptide" evidence="1">
    <location>
        <begin position="1"/>
        <end position="26"/>
    </location>
</feature>
<feature type="chain" id="PRO_0000318093" description="Follistatin-related protein 3">
    <location>
        <begin position="27"/>
        <end position="261"/>
    </location>
</feature>
<feature type="domain" description="TB" evidence="3">
    <location>
        <begin position="36"/>
        <end position="107"/>
    </location>
</feature>
<feature type="domain" description="Follistatin-like 1">
    <location>
        <begin position="99"/>
        <end position="119"/>
    </location>
</feature>
<feature type="domain" description="Kazal-like 1" evidence="4">
    <location>
        <begin position="113"/>
        <end position="169"/>
    </location>
</feature>
<feature type="domain" description="Follistatin-like 2">
    <location>
        <begin position="170"/>
        <end position="193"/>
    </location>
</feature>
<feature type="domain" description="Kazal-like 2" evidence="4">
    <location>
        <begin position="189"/>
        <end position="245"/>
    </location>
</feature>
<feature type="region of interest" description="Disordered" evidence="5">
    <location>
        <begin position="242"/>
        <end position="261"/>
    </location>
</feature>
<feature type="compositionally biased region" description="Acidic residues" evidence="5">
    <location>
        <begin position="250"/>
        <end position="261"/>
    </location>
</feature>
<feature type="glycosylation site" description="N-linked (GlcNAc...) asparagine" evidence="2">
    <location>
        <position position="73"/>
    </location>
</feature>
<feature type="glycosylation site" description="N-linked (GlcNAc...) asparagine" evidence="2">
    <location>
        <position position="215"/>
    </location>
</feature>
<feature type="disulfide bond" evidence="3">
    <location>
        <begin position="38"/>
        <end position="61"/>
    </location>
</feature>
<feature type="disulfide bond" evidence="3">
    <location>
        <begin position="48"/>
        <end position="92"/>
    </location>
</feature>
<feature type="disulfide bond" evidence="3">
    <location>
        <begin position="62"/>
        <end position="95"/>
    </location>
</feature>
<feature type="disulfide bond" evidence="4">
    <location>
        <begin position="99"/>
        <end position="110"/>
    </location>
</feature>
<feature type="disulfide bond" evidence="4">
    <location>
        <begin position="104"/>
        <end position="119"/>
    </location>
</feature>
<feature type="disulfide bond" evidence="4">
    <location>
        <begin position="121"/>
        <end position="153"/>
    </location>
</feature>
<feature type="disulfide bond" evidence="4">
    <location>
        <begin position="125"/>
        <end position="146"/>
    </location>
</feature>
<feature type="disulfide bond" evidence="4">
    <location>
        <begin position="135"/>
        <end position="167"/>
    </location>
</feature>
<feature type="disulfide bond" evidence="4">
    <location>
        <begin position="195"/>
        <end position="229"/>
    </location>
</feature>
<feature type="disulfide bond" evidence="4">
    <location>
        <begin position="200"/>
        <end position="222"/>
    </location>
</feature>
<feature type="disulfide bond" evidence="4">
    <location>
        <begin position="211"/>
        <end position="243"/>
    </location>
</feature>
<evidence type="ECO:0000250" key="1"/>
<evidence type="ECO:0000255" key="2"/>
<evidence type="ECO:0000255" key="3">
    <source>
        <dbReference type="PROSITE-ProRule" id="PRU00697"/>
    </source>
</evidence>
<evidence type="ECO:0000255" key="4">
    <source>
        <dbReference type="PROSITE-ProRule" id="PRU00798"/>
    </source>
</evidence>
<evidence type="ECO:0000256" key="5">
    <source>
        <dbReference type="SAM" id="MobiDB-lite"/>
    </source>
</evidence>
<proteinExistence type="evidence at transcript level"/>
<keyword id="KW-1015">Disulfide bond</keyword>
<keyword id="KW-0325">Glycoprotein</keyword>
<keyword id="KW-0539">Nucleus</keyword>
<keyword id="KW-0892">Osteogenesis</keyword>
<keyword id="KW-1185">Reference proteome</keyword>
<keyword id="KW-0677">Repeat</keyword>
<keyword id="KW-0964">Secreted</keyword>
<keyword id="KW-0732">Signal</keyword>
<keyword id="KW-0804">Transcription</keyword>
<keyword id="KW-0805">Transcription regulation</keyword>